<reference key="1">
    <citation type="journal article" date="2006" name="BMC Evol. Biol.">
        <title>Complete plastid genome sequences of Drimys, Liriodendron, and Piper: implications for the phylogenetic relationships of magnoliids.</title>
        <authorList>
            <person name="Cai Z."/>
            <person name="Penaflor C."/>
            <person name="Kuehl J.V."/>
            <person name="Leebens-Mack J."/>
            <person name="Carlson J.E."/>
            <person name="dePamphilis C.W."/>
            <person name="Boore J.L."/>
            <person name="Jansen R.K."/>
        </authorList>
    </citation>
    <scope>NUCLEOTIDE SEQUENCE [LARGE SCALE GENOMIC DNA]</scope>
</reference>
<comment type="function">
    <text evidence="1">One of the primary rRNA binding proteins, it binds directly to 16S rRNA where it nucleates assembly of the head domain of the 30S subunit.</text>
</comment>
<comment type="subunit">
    <text>Part of the 30S ribosomal subunit.</text>
</comment>
<comment type="subcellular location">
    <subcellularLocation>
        <location>Plastid</location>
        <location>Chloroplast</location>
    </subcellularLocation>
</comment>
<comment type="similarity">
    <text evidence="3">Belongs to the universal ribosomal protein uS7 family.</text>
</comment>
<sequence>MSRRGTAEEKTAKSDPIYRNRLVNMLVNRILKHGKKSLAYQIIYRAVKKIQQKTETNPLSVLRQAIRGVTPDIAVKARRVGGSTHQVPIEIGSTQGKALAIRWLLGASRKRPGRNMAFKLSSELVDAAKGSGDAIRKKEETHRMAEANRAFAHFR</sequence>
<evidence type="ECO:0000250" key="1"/>
<evidence type="ECO:0000255" key="2">
    <source>
        <dbReference type="HAMAP-Rule" id="MF_00480"/>
    </source>
</evidence>
<evidence type="ECO:0000305" key="3"/>
<keyword id="KW-0150">Chloroplast</keyword>
<keyword id="KW-0934">Plastid</keyword>
<keyword id="KW-0687">Ribonucleoprotein</keyword>
<keyword id="KW-0689">Ribosomal protein</keyword>
<keyword id="KW-0694">RNA-binding</keyword>
<keyword id="KW-0699">rRNA-binding</keyword>
<dbReference type="EMBL" id="DQ887676">
    <property type="protein sequence ID" value="ABH88343.1"/>
    <property type="molecule type" value="Genomic_DNA"/>
</dbReference>
<dbReference type="EMBL" id="DQ887676">
    <property type="protein sequence ID" value="ABH88358.1"/>
    <property type="molecule type" value="Genomic_DNA"/>
</dbReference>
<dbReference type="SMR" id="Q06GT7"/>
<dbReference type="GO" id="GO:0009507">
    <property type="term" value="C:chloroplast"/>
    <property type="evidence" value="ECO:0007669"/>
    <property type="project" value="UniProtKB-SubCell"/>
</dbReference>
<dbReference type="GO" id="GO:0015935">
    <property type="term" value="C:small ribosomal subunit"/>
    <property type="evidence" value="ECO:0007669"/>
    <property type="project" value="InterPro"/>
</dbReference>
<dbReference type="GO" id="GO:0019843">
    <property type="term" value="F:rRNA binding"/>
    <property type="evidence" value="ECO:0007669"/>
    <property type="project" value="UniProtKB-UniRule"/>
</dbReference>
<dbReference type="GO" id="GO:0003735">
    <property type="term" value="F:structural constituent of ribosome"/>
    <property type="evidence" value="ECO:0007669"/>
    <property type="project" value="InterPro"/>
</dbReference>
<dbReference type="GO" id="GO:0006412">
    <property type="term" value="P:translation"/>
    <property type="evidence" value="ECO:0007669"/>
    <property type="project" value="UniProtKB-UniRule"/>
</dbReference>
<dbReference type="CDD" id="cd14871">
    <property type="entry name" value="uS7_Chloroplast"/>
    <property type="match status" value="1"/>
</dbReference>
<dbReference type="FunFam" id="1.10.455.10:FF:000001">
    <property type="entry name" value="30S ribosomal protein S7"/>
    <property type="match status" value="1"/>
</dbReference>
<dbReference type="Gene3D" id="1.10.455.10">
    <property type="entry name" value="Ribosomal protein S7 domain"/>
    <property type="match status" value="1"/>
</dbReference>
<dbReference type="HAMAP" id="MF_00480_B">
    <property type="entry name" value="Ribosomal_uS7_B"/>
    <property type="match status" value="1"/>
</dbReference>
<dbReference type="InterPro" id="IPR000235">
    <property type="entry name" value="Ribosomal_uS7"/>
</dbReference>
<dbReference type="InterPro" id="IPR005717">
    <property type="entry name" value="Ribosomal_uS7_bac/org-type"/>
</dbReference>
<dbReference type="InterPro" id="IPR020606">
    <property type="entry name" value="Ribosomal_uS7_CS"/>
</dbReference>
<dbReference type="InterPro" id="IPR023798">
    <property type="entry name" value="Ribosomal_uS7_dom"/>
</dbReference>
<dbReference type="InterPro" id="IPR036823">
    <property type="entry name" value="Ribosomal_uS7_dom_sf"/>
</dbReference>
<dbReference type="NCBIfam" id="TIGR01029">
    <property type="entry name" value="rpsG_bact"/>
    <property type="match status" value="1"/>
</dbReference>
<dbReference type="PANTHER" id="PTHR11205">
    <property type="entry name" value="RIBOSOMAL PROTEIN S7"/>
    <property type="match status" value="1"/>
</dbReference>
<dbReference type="Pfam" id="PF00177">
    <property type="entry name" value="Ribosomal_S7"/>
    <property type="match status" value="1"/>
</dbReference>
<dbReference type="PIRSF" id="PIRSF002122">
    <property type="entry name" value="RPS7p_RPS7a_RPS5e_RPS7o"/>
    <property type="match status" value="1"/>
</dbReference>
<dbReference type="SUPFAM" id="SSF47973">
    <property type="entry name" value="Ribosomal protein S7"/>
    <property type="match status" value="1"/>
</dbReference>
<dbReference type="PROSITE" id="PS00052">
    <property type="entry name" value="RIBOSOMAL_S7"/>
    <property type="match status" value="1"/>
</dbReference>
<protein>
    <recommendedName>
        <fullName evidence="2">Small ribosomal subunit protein uS7cz/uS7cy</fullName>
    </recommendedName>
    <alternativeName>
        <fullName>30S ribosomal protein S7, chloroplastic</fullName>
    </alternativeName>
</protein>
<name>RR7_DRIGR</name>
<feature type="chain" id="PRO_0000277038" description="Small ribosomal subunit protein uS7cz/uS7cy">
    <location>
        <begin position="1"/>
        <end position="155"/>
    </location>
</feature>
<organism>
    <name type="scientific">Drimys granadensis</name>
    <dbReference type="NCBI Taxonomy" id="224735"/>
    <lineage>
        <taxon>Eukaryota</taxon>
        <taxon>Viridiplantae</taxon>
        <taxon>Streptophyta</taxon>
        <taxon>Embryophyta</taxon>
        <taxon>Tracheophyta</taxon>
        <taxon>Spermatophyta</taxon>
        <taxon>Magnoliopsida</taxon>
        <taxon>Magnoliidae</taxon>
        <taxon>Canellales</taxon>
        <taxon>Winteraceae</taxon>
        <taxon>Drimys</taxon>
    </lineage>
</organism>
<geneLocation type="chloroplast"/>
<accession>Q06GT7</accession>
<proteinExistence type="inferred from homology"/>
<gene>
    <name type="primary">rps7-A</name>
</gene>
<gene>
    <name type="primary">rps7-B</name>
</gene>